<feature type="chain" id="PRO_0000335174" description="DNA mismatch repair protein MutS">
    <location>
        <begin position="1"/>
        <end position="846"/>
    </location>
</feature>
<feature type="binding site" evidence="1">
    <location>
        <begin position="610"/>
        <end position="617"/>
    </location>
    <ligand>
        <name>ATP</name>
        <dbReference type="ChEBI" id="CHEBI:30616"/>
    </ligand>
</feature>
<organism>
    <name type="scientific">Legionella pneumophila (strain Corby)</name>
    <dbReference type="NCBI Taxonomy" id="400673"/>
    <lineage>
        <taxon>Bacteria</taxon>
        <taxon>Pseudomonadati</taxon>
        <taxon>Pseudomonadota</taxon>
        <taxon>Gammaproteobacteria</taxon>
        <taxon>Legionellales</taxon>
        <taxon>Legionellaceae</taxon>
        <taxon>Legionella</taxon>
    </lineage>
</organism>
<accession>A5ICW2</accession>
<comment type="function">
    <text evidence="1">This protein is involved in the repair of mismatches in DNA. It is possible that it carries out the mismatch recognition step. This protein has a weak ATPase activity.</text>
</comment>
<comment type="similarity">
    <text evidence="1">Belongs to the DNA mismatch repair MutS family.</text>
</comment>
<comment type="sequence caution" evidence="2">
    <conflict type="erroneous initiation">
        <sequence resource="EMBL-CDS" id="ABQ55212"/>
    </conflict>
</comment>
<proteinExistence type="inferred from homology"/>
<reference key="1">
    <citation type="submission" date="2006-11" db="EMBL/GenBank/DDBJ databases">
        <title>Identification and characterization of a new conjugation/ type IVA secretion system (trb/tra) of L. pneumophila Corby localized on a mobile genomic island.</title>
        <authorList>
            <person name="Gloeckner G."/>
            <person name="Albert-Weissenberger C."/>
            <person name="Weinmann E."/>
            <person name="Jacobi S."/>
            <person name="Schunder E."/>
            <person name="Steinert M."/>
            <person name="Buchrieser C."/>
            <person name="Hacker J."/>
            <person name="Heuner K."/>
        </authorList>
    </citation>
    <scope>NUCLEOTIDE SEQUENCE [LARGE SCALE GENOMIC DNA]</scope>
    <source>
        <strain>Corby</strain>
    </source>
</reference>
<sequence>MASSHTPMMQQYLRIKTDYPDMLLFYRMGDFYELFFDDAKRASQLLDLTLTHRGQSADKPIPMAGVPYHAVENYLARLLKKGESVAICEQIGDPATSKGPVERQVTRIITPGTVTDEALLDARKDNILLAIHTQKQKIGIAWVDLGGGRFHLQELTEEHQLNAELVRLQPAELLCKESTPLPSFCSNFAVKFRPGWEFDASNAHKLLCEQFSVTDLSAFGEQNYPTALIAAGALLAYLKTTQKQSLPHLTTLTLEQSEDYLQLDASTQKHLELFENIHGGGEHCLLSILDKTACAMGSRLLKRWLGKPLKQHAIIQTRQQAIKEIIFLQQDVSLHQLIKQCADVERIVSRIALKSARPRDLVSLLQTLTLLPAIHDELQENKSLLINEIKKEISPLPLLQQLLETAIIDNPPMLIRDGGVIAPGFDEELDELRNLSSNAHETLVKLEQEEKNRTGLSTLKLGYNSVQGFYIELSKAQAQNAPPHFHRKQTLKNVERYITPELKLFEDKVLSAQSKALAREKWLYDNLLEEIQQYIPELSDLAKSLAQLDVLVTLAERAQSLNWNCPNLVPESGIMIQAGRHPVIEPLLQERFIANDLELKPNQNMLLITGPNMGGKSTYMRQTALIVLLAHIGSFVPADKVTLGPLDRIFTRIGASDDLSSGRSTFMVEMTETAQILRQATSQSLVLIDEIGRGTSTYDGMALAYASCAFLASTIKAYTLFSTHYLELTELPKEFSCIRNVHLQASIKTGQIVFLYRVEEGCANRSYGLEVAELAGIPKEVLKLAHEHLNQIQDTQSILVQTQIIKPPTSPVLTELKKIDPDRLTAKEALDLIYKLKHLECAESIN</sequence>
<protein>
    <recommendedName>
        <fullName evidence="1">DNA mismatch repair protein MutS</fullName>
    </recommendedName>
</protein>
<gene>
    <name evidence="1" type="primary">mutS</name>
    <name type="ordered locus">LPC_1249</name>
</gene>
<name>MUTS_LEGPC</name>
<dbReference type="EMBL" id="CP000675">
    <property type="protein sequence ID" value="ABQ55212.1"/>
    <property type="status" value="ALT_INIT"/>
    <property type="molecule type" value="Genomic_DNA"/>
</dbReference>
<dbReference type="RefSeq" id="WP_014844166.1">
    <property type="nucleotide sequence ID" value="NC_009494.2"/>
</dbReference>
<dbReference type="SMR" id="A5ICW2"/>
<dbReference type="GeneID" id="57035797"/>
<dbReference type="KEGG" id="lpc:LPC_1249"/>
<dbReference type="HOGENOM" id="CLU_002472_4_0_6"/>
<dbReference type="GO" id="GO:0005829">
    <property type="term" value="C:cytosol"/>
    <property type="evidence" value="ECO:0007669"/>
    <property type="project" value="TreeGrafter"/>
</dbReference>
<dbReference type="GO" id="GO:0005524">
    <property type="term" value="F:ATP binding"/>
    <property type="evidence" value="ECO:0007669"/>
    <property type="project" value="UniProtKB-UniRule"/>
</dbReference>
<dbReference type="GO" id="GO:0140664">
    <property type="term" value="F:ATP-dependent DNA damage sensor activity"/>
    <property type="evidence" value="ECO:0007669"/>
    <property type="project" value="InterPro"/>
</dbReference>
<dbReference type="GO" id="GO:0003684">
    <property type="term" value="F:damaged DNA binding"/>
    <property type="evidence" value="ECO:0007669"/>
    <property type="project" value="UniProtKB-UniRule"/>
</dbReference>
<dbReference type="GO" id="GO:0030983">
    <property type="term" value="F:mismatched DNA binding"/>
    <property type="evidence" value="ECO:0007669"/>
    <property type="project" value="InterPro"/>
</dbReference>
<dbReference type="GO" id="GO:0006298">
    <property type="term" value="P:mismatch repair"/>
    <property type="evidence" value="ECO:0007669"/>
    <property type="project" value="UniProtKB-UniRule"/>
</dbReference>
<dbReference type="CDD" id="cd03284">
    <property type="entry name" value="ABC_MutS1"/>
    <property type="match status" value="1"/>
</dbReference>
<dbReference type="FunFam" id="1.10.1420.10:FF:000002">
    <property type="entry name" value="DNA mismatch repair protein MutS"/>
    <property type="match status" value="1"/>
</dbReference>
<dbReference type="FunFam" id="3.40.1170.10:FF:000001">
    <property type="entry name" value="DNA mismatch repair protein MutS"/>
    <property type="match status" value="1"/>
</dbReference>
<dbReference type="FunFam" id="3.40.50.300:FF:000870">
    <property type="entry name" value="MutS protein homolog 4"/>
    <property type="match status" value="1"/>
</dbReference>
<dbReference type="Gene3D" id="1.10.1420.10">
    <property type="match status" value="2"/>
</dbReference>
<dbReference type="Gene3D" id="6.10.140.430">
    <property type="match status" value="1"/>
</dbReference>
<dbReference type="Gene3D" id="3.40.1170.10">
    <property type="entry name" value="DNA repair protein MutS, domain I"/>
    <property type="match status" value="1"/>
</dbReference>
<dbReference type="Gene3D" id="3.30.420.110">
    <property type="entry name" value="MutS, connector domain"/>
    <property type="match status" value="1"/>
</dbReference>
<dbReference type="Gene3D" id="3.40.50.300">
    <property type="entry name" value="P-loop containing nucleotide triphosphate hydrolases"/>
    <property type="match status" value="1"/>
</dbReference>
<dbReference type="HAMAP" id="MF_00096">
    <property type="entry name" value="MutS"/>
    <property type="match status" value="1"/>
</dbReference>
<dbReference type="InterPro" id="IPR005748">
    <property type="entry name" value="DNA_mismatch_repair_MutS"/>
</dbReference>
<dbReference type="InterPro" id="IPR007695">
    <property type="entry name" value="DNA_mismatch_repair_MutS-lik_N"/>
</dbReference>
<dbReference type="InterPro" id="IPR017261">
    <property type="entry name" value="DNA_mismatch_repair_MutS/MSH"/>
</dbReference>
<dbReference type="InterPro" id="IPR000432">
    <property type="entry name" value="DNA_mismatch_repair_MutS_C"/>
</dbReference>
<dbReference type="InterPro" id="IPR007861">
    <property type="entry name" value="DNA_mismatch_repair_MutS_clamp"/>
</dbReference>
<dbReference type="InterPro" id="IPR007696">
    <property type="entry name" value="DNA_mismatch_repair_MutS_core"/>
</dbReference>
<dbReference type="InterPro" id="IPR016151">
    <property type="entry name" value="DNA_mismatch_repair_MutS_N"/>
</dbReference>
<dbReference type="InterPro" id="IPR036187">
    <property type="entry name" value="DNA_mismatch_repair_MutS_sf"/>
</dbReference>
<dbReference type="InterPro" id="IPR007860">
    <property type="entry name" value="DNA_mmatch_repair_MutS_con_dom"/>
</dbReference>
<dbReference type="InterPro" id="IPR045076">
    <property type="entry name" value="MutS"/>
</dbReference>
<dbReference type="InterPro" id="IPR036678">
    <property type="entry name" value="MutS_con_dom_sf"/>
</dbReference>
<dbReference type="InterPro" id="IPR027417">
    <property type="entry name" value="P-loop_NTPase"/>
</dbReference>
<dbReference type="NCBIfam" id="TIGR01070">
    <property type="entry name" value="mutS1"/>
    <property type="match status" value="1"/>
</dbReference>
<dbReference type="NCBIfam" id="NF003810">
    <property type="entry name" value="PRK05399.1"/>
    <property type="match status" value="1"/>
</dbReference>
<dbReference type="PANTHER" id="PTHR11361:SF34">
    <property type="entry name" value="DNA MISMATCH REPAIR PROTEIN MSH1, MITOCHONDRIAL"/>
    <property type="match status" value="1"/>
</dbReference>
<dbReference type="PANTHER" id="PTHR11361">
    <property type="entry name" value="DNA MISMATCH REPAIR PROTEIN MUTS FAMILY MEMBER"/>
    <property type="match status" value="1"/>
</dbReference>
<dbReference type="Pfam" id="PF01624">
    <property type="entry name" value="MutS_I"/>
    <property type="match status" value="1"/>
</dbReference>
<dbReference type="Pfam" id="PF05188">
    <property type="entry name" value="MutS_II"/>
    <property type="match status" value="1"/>
</dbReference>
<dbReference type="Pfam" id="PF05192">
    <property type="entry name" value="MutS_III"/>
    <property type="match status" value="1"/>
</dbReference>
<dbReference type="Pfam" id="PF05190">
    <property type="entry name" value="MutS_IV"/>
    <property type="match status" value="1"/>
</dbReference>
<dbReference type="Pfam" id="PF00488">
    <property type="entry name" value="MutS_V"/>
    <property type="match status" value="1"/>
</dbReference>
<dbReference type="PIRSF" id="PIRSF037677">
    <property type="entry name" value="DNA_mis_repair_Msh6"/>
    <property type="match status" value="1"/>
</dbReference>
<dbReference type="SMART" id="SM00534">
    <property type="entry name" value="MUTSac"/>
    <property type="match status" value="1"/>
</dbReference>
<dbReference type="SMART" id="SM00533">
    <property type="entry name" value="MUTSd"/>
    <property type="match status" value="1"/>
</dbReference>
<dbReference type="SUPFAM" id="SSF55271">
    <property type="entry name" value="DNA repair protein MutS, domain I"/>
    <property type="match status" value="1"/>
</dbReference>
<dbReference type="SUPFAM" id="SSF53150">
    <property type="entry name" value="DNA repair protein MutS, domain II"/>
    <property type="match status" value="1"/>
</dbReference>
<dbReference type="SUPFAM" id="SSF48334">
    <property type="entry name" value="DNA repair protein MutS, domain III"/>
    <property type="match status" value="1"/>
</dbReference>
<dbReference type="SUPFAM" id="SSF52540">
    <property type="entry name" value="P-loop containing nucleoside triphosphate hydrolases"/>
    <property type="match status" value="1"/>
</dbReference>
<dbReference type="PROSITE" id="PS00486">
    <property type="entry name" value="DNA_MISMATCH_REPAIR_2"/>
    <property type="match status" value="1"/>
</dbReference>
<keyword id="KW-0067">ATP-binding</keyword>
<keyword id="KW-0227">DNA damage</keyword>
<keyword id="KW-0234">DNA repair</keyword>
<keyword id="KW-0238">DNA-binding</keyword>
<keyword id="KW-0547">Nucleotide-binding</keyword>
<evidence type="ECO:0000255" key="1">
    <source>
        <dbReference type="HAMAP-Rule" id="MF_00096"/>
    </source>
</evidence>
<evidence type="ECO:0000305" key="2"/>